<organism>
    <name type="scientific">Bacillus cereus (strain ATCC 14579 / DSM 31 / CCUG 7414 / JCM 2152 / NBRC 15305 / NCIMB 9373 / NCTC 2599 / NRRL B-3711)</name>
    <dbReference type="NCBI Taxonomy" id="226900"/>
    <lineage>
        <taxon>Bacteria</taxon>
        <taxon>Bacillati</taxon>
        <taxon>Bacillota</taxon>
        <taxon>Bacilli</taxon>
        <taxon>Bacillales</taxon>
        <taxon>Bacillaceae</taxon>
        <taxon>Bacillus</taxon>
        <taxon>Bacillus cereus group</taxon>
    </lineage>
</organism>
<reference key="1">
    <citation type="journal article" date="2003" name="Nature">
        <title>Genome sequence of Bacillus cereus and comparative analysis with Bacillus anthracis.</title>
        <authorList>
            <person name="Ivanova N."/>
            <person name="Sorokin A."/>
            <person name="Anderson I."/>
            <person name="Galleron N."/>
            <person name="Candelon B."/>
            <person name="Kapatral V."/>
            <person name="Bhattacharyya A."/>
            <person name="Reznik G."/>
            <person name="Mikhailova N."/>
            <person name="Lapidus A."/>
            <person name="Chu L."/>
            <person name="Mazur M."/>
            <person name="Goltsman E."/>
            <person name="Larsen N."/>
            <person name="D'Souza M."/>
            <person name="Walunas T."/>
            <person name="Grechkin Y."/>
            <person name="Pusch G."/>
            <person name="Haselkorn R."/>
            <person name="Fonstein M."/>
            <person name="Ehrlich S.D."/>
            <person name="Overbeek R."/>
            <person name="Kyrpides N.C."/>
        </authorList>
    </citation>
    <scope>NUCLEOTIDE SEQUENCE [LARGE SCALE GENOMIC DNA]</scope>
    <source>
        <strain>ATCC 14579 / DSM 31 / CCUG 7414 / JCM 2152 / NBRC 15305 / NCIMB 9373 / NCTC 2599 / NRRL B-3711</strain>
    </source>
</reference>
<dbReference type="EMBL" id="AE016877">
    <property type="protein sequence ID" value="AAP10829.1"/>
    <property type="molecule type" value="Genomic_DNA"/>
</dbReference>
<dbReference type="RefSeq" id="NP_833628.1">
    <property type="nucleotide sequence ID" value="NC_004722.1"/>
</dbReference>
<dbReference type="RefSeq" id="WP_001065793.1">
    <property type="nucleotide sequence ID" value="NZ_CP138336.1"/>
</dbReference>
<dbReference type="SMR" id="Q819Q5"/>
<dbReference type="STRING" id="226900.BC_3908"/>
<dbReference type="KEGG" id="bce:BC3908"/>
<dbReference type="PATRIC" id="fig|226900.8.peg.4030"/>
<dbReference type="HOGENOM" id="CLU_046278_2_1_9"/>
<dbReference type="OrthoDB" id="1819027at2"/>
<dbReference type="Proteomes" id="UP000001417">
    <property type="component" value="Chromosome"/>
</dbReference>
<dbReference type="GO" id="GO:0032153">
    <property type="term" value="C:cell division site"/>
    <property type="evidence" value="ECO:0007669"/>
    <property type="project" value="UniProtKB-UniRule"/>
</dbReference>
<dbReference type="GO" id="GO:0005886">
    <property type="term" value="C:plasma membrane"/>
    <property type="evidence" value="ECO:0007669"/>
    <property type="project" value="UniProtKB-SubCell"/>
</dbReference>
<dbReference type="GO" id="GO:0043093">
    <property type="term" value="P:FtsZ-dependent cytokinesis"/>
    <property type="evidence" value="ECO:0007669"/>
    <property type="project" value="UniProtKB-UniRule"/>
</dbReference>
<dbReference type="Gene3D" id="3.40.50.10960">
    <property type="match status" value="1"/>
</dbReference>
<dbReference type="Gene3D" id="3.10.20.310">
    <property type="entry name" value="membrane protein fhac"/>
    <property type="match status" value="1"/>
</dbReference>
<dbReference type="HAMAP" id="MF_00912">
    <property type="entry name" value="DivIB"/>
    <property type="match status" value="1"/>
</dbReference>
<dbReference type="InterPro" id="IPR005548">
    <property type="entry name" value="Cell_div_FtsQ/DivIB_C"/>
</dbReference>
<dbReference type="InterPro" id="IPR026580">
    <property type="entry name" value="DivIB"/>
</dbReference>
<dbReference type="InterPro" id="IPR050487">
    <property type="entry name" value="FtsQ_DivIB"/>
</dbReference>
<dbReference type="InterPro" id="IPR034746">
    <property type="entry name" value="POTRA"/>
</dbReference>
<dbReference type="InterPro" id="IPR013685">
    <property type="entry name" value="POTRA_FtsQ_type"/>
</dbReference>
<dbReference type="PANTHER" id="PTHR37820">
    <property type="entry name" value="CELL DIVISION PROTEIN DIVIB"/>
    <property type="match status" value="1"/>
</dbReference>
<dbReference type="PANTHER" id="PTHR37820:SF1">
    <property type="entry name" value="CELL DIVISION PROTEIN FTSQ"/>
    <property type="match status" value="1"/>
</dbReference>
<dbReference type="Pfam" id="PF03799">
    <property type="entry name" value="FtsQ_DivIB_C"/>
    <property type="match status" value="1"/>
</dbReference>
<dbReference type="Pfam" id="PF08478">
    <property type="entry name" value="POTRA_1"/>
    <property type="match status" value="1"/>
</dbReference>
<dbReference type="PROSITE" id="PS51779">
    <property type="entry name" value="POTRA"/>
    <property type="match status" value="1"/>
</dbReference>
<comment type="function">
    <text evidence="1">Cell division protein that may be involved in stabilizing or promoting the assembly of the division complex.</text>
</comment>
<comment type="subcellular location">
    <subcellularLocation>
        <location evidence="1">Cell membrane</location>
        <topology evidence="1">Single-pass type II membrane protein</topology>
    </subcellularLocation>
    <text evidence="1">Localizes to the division septum.</text>
</comment>
<comment type="similarity">
    <text evidence="1">Belongs to the FtsQ/DivIB family. DivIB subfamily.</text>
</comment>
<name>DIVIB_BACCR</name>
<accession>Q819Q5</accession>
<sequence length="256" mass="29559">MNNSKVIKLQDRVPKLKNQKKKNKKNVNHRLILYISILFLLVLFLIYFRSPLSNIKKISVFGNHYMTDEQVMKDSGVTYDTSYFRVTAHKAEENLTKRKEIKAVNVKKRFPNNIDIHIEEYLTIGYINKEGKLQPLLENGKTLDVLPNGKLPVAAPIFEPFKEEKMKELIAELEKLTPAILKSISEIRYSPTNANEDHLTLYMNEGYEVSTTIQNFAKRMEAYPLILKTIEPGKKVLIDLEVGAYTKELGAEEKKE</sequence>
<evidence type="ECO:0000255" key="1">
    <source>
        <dbReference type="HAMAP-Rule" id="MF_00912"/>
    </source>
</evidence>
<evidence type="ECO:0000255" key="2">
    <source>
        <dbReference type="PROSITE-ProRule" id="PRU01115"/>
    </source>
</evidence>
<gene>
    <name evidence="1" type="primary">divIB</name>
    <name type="ordered locus">BC_3908</name>
</gene>
<keyword id="KW-0131">Cell cycle</keyword>
<keyword id="KW-0132">Cell division</keyword>
<keyword id="KW-1003">Cell membrane</keyword>
<keyword id="KW-0472">Membrane</keyword>
<keyword id="KW-1185">Reference proteome</keyword>
<keyword id="KW-0812">Transmembrane</keyword>
<keyword id="KW-1133">Transmembrane helix</keyword>
<protein>
    <recommendedName>
        <fullName evidence="1">Cell division protein DivIB</fullName>
    </recommendedName>
</protein>
<feature type="chain" id="PRO_0000414757" description="Cell division protein DivIB">
    <location>
        <begin position="1"/>
        <end position="256"/>
    </location>
</feature>
<feature type="topological domain" description="Cytoplasmic" evidence="1">
    <location>
        <begin position="1"/>
        <end position="30"/>
    </location>
</feature>
<feature type="transmembrane region" description="Helical" evidence="1">
    <location>
        <begin position="31"/>
        <end position="51"/>
    </location>
</feature>
<feature type="topological domain" description="Extracellular" evidence="1">
    <location>
        <begin position="52"/>
        <end position="256"/>
    </location>
</feature>
<feature type="domain" description="POTRA" evidence="2">
    <location>
        <begin position="53"/>
        <end position="121"/>
    </location>
</feature>
<proteinExistence type="inferred from homology"/>